<accession>Q05AS3</accession>
<accession>Q28H96</accession>
<keyword id="KW-0025">Alternative splicing</keyword>
<keyword id="KW-0067">ATP-binding</keyword>
<keyword id="KW-0131">Cell cycle</keyword>
<keyword id="KW-0132">Cell division</keyword>
<keyword id="KW-0963">Cytoplasm</keyword>
<keyword id="KW-0206">Cytoskeleton</keyword>
<keyword id="KW-0217">Developmental protein</keyword>
<keyword id="KW-0221">Differentiation</keyword>
<keyword id="KW-0413">Isomerase</keyword>
<keyword id="KW-0472">Membrane</keyword>
<keyword id="KW-0493">Microtubule</keyword>
<keyword id="KW-0524">Neurogenesis</keyword>
<keyword id="KW-0547">Nucleotide-binding</keyword>
<keyword id="KW-0539">Nucleus</keyword>
<keyword id="KW-1185">Reference proteome</keyword>
<organism>
    <name type="scientific">Xenopus tropicalis</name>
    <name type="common">Western clawed frog</name>
    <name type="synonym">Silurana tropicalis</name>
    <dbReference type="NCBI Taxonomy" id="8364"/>
    <lineage>
        <taxon>Eukaryota</taxon>
        <taxon>Metazoa</taxon>
        <taxon>Chordata</taxon>
        <taxon>Craniata</taxon>
        <taxon>Vertebrata</taxon>
        <taxon>Euteleostomi</taxon>
        <taxon>Amphibia</taxon>
        <taxon>Batrachia</taxon>
        <taxon>Anura</taxon>
        <taxon>Pipoidea</taxon>
        <taxon>Pipidae</taxon>
        <taxon>Xenopodinae</taxon>
        <taxon>Xenopus</taxon>
        <taxon>Silurana</taxon>
    </lineage>
</organism>
<sequence>MNSPGGRNNKKKPVTPAAETGPGPPTPPPPPAETQVLLAPPSLHKRNLYLFSYPLLAAFSLLRFLAFQLGLLFVWFCERLSRRVMADKGSTAARTAAAPAQDRPQEPEVVRSYHQQAFQYISMALRIDEEEKDQKEQAIQWYKKGIEELEKGIAVTITGKGEQYDRARRLQAKMSTNLLMAKDRLQLLAKLKADIQGQHSQMEVCSDNTNLPCRNGLLKPEKGAVPKKKDPPSISSNSYSRVKAAPKSGSLGNRIPNCTGVSSSARQAGPNAPSNRGAAGKNNTRTNKPTTPTTAVRKKDMKNLRNVDSNLANLILNEIVDSGPTVKFADIAGQDLAKQALQEIVILPSIRPELFTGLRAPARGLLLFGPPGNGKTMLAKAVAAESNATFFNISAASLTSKYVGEGEKLVRALFSVARELQPSIIFIDEVDSLLCERREGEHDASRRLKTEFLIEFDGVQSGGDDRVLVMGATNRPQELDDAVLRRFTKRVYVSLPNEETRLLLLKNLLSKQGNPLNEKELTQLSRLTEGYSGSDITALAKDAALGPIRELKPEQVKNMAASEMRNIKYSDFLSSLKKIKCSVSPSTLESYIRWNKEFGDTTV</sequence>
<name>SPAST_XENTR</name>
<evidence type="ECO:0000255" key="1"/>
<evidence type="ECO:0000255" key="2">
    <source>
        <dbReference type="HAMAP-Rule" id="MF_03021"/>
    </source>
</evidence>
<evidence type="ECO:0000256" key="3">
    <source>
        <dbReference type="SAM" id="MobiDB-lite"/>
    </source>
</evidence>
<evidence type="ECO:0000303" key="4">
    <source ref="1"/>
</evidence>
<evidence type="ECO:0000305" key="5"/>
<protein>
    <recommendedName>
        <fullName evidence="2">Spastin</fullName>
        <ecNumber evidence="2">5.6.1.1</ecNumber>
    </recommendedName>
</protein>
<comment type="function">
    <text evidence="2">ATP-dependent microtubule severing protein that specifically recognizes and cuts microtubules that are polyglutamylated. Preferentially recognizes and acts on microtubules decorated with short polyglutamate tails: severing activity increases as the number of glutamates per tubulin rises from one to eight, but decreases beyond this glutamylation threshold. Microtubule severing promotes reorganization of cellular microtubule arrays and the release of microtubules from the centrosome following nucleation. Required for membrane traffic from the endoplasmic reticulum (ER) to the Golgi and for completion of the abscission stage of cytokinesis. Also plays a role in axon growth and the formation of axonal branches.</text>
</comment>
<comment type="catalytic activity">
    <reaction evidence="2">
        <text>n ATP + n H2O + a microtubule = n ADP + n phosphate + (n+1) alpha/beta tubulin heterodimers.</text>
        <dbReference type="EC" id="5.6.1.1"/>
    </reaction>
</comment>
<comment type="subunit">
    <text evidence="2">Homohexamer. The homohexamer is stabilized by ATP-binding. The homohexamer may adopt a ring conformation through which microtubules pass prior to being severed. Interacts with microtubules.</text>
</comment>
<comment type="subcellular location">
    <subcellularLocation>
        <location evidence="2">Membrane</location>
        <topology evidence="2">Peripheral membrane protein</topology>
    </subcellularLocation>
    <subcellularLocation>
        <location evidence="2">Cytoplasm</location>
        <location evidence="2">Cytoskeleton</location>
        <location evidence="2">Microtubule organizing center</location>
        <location evidence="2">Centrosome</location>
    </subcellularLocation>
    <subcellularLocation>
        <location evidence="2">Cytoplasm</location>
        <location evidence="2">Cytoskeleton</location>
    </subcellularLocation>
    <subcellularLocation>
        <location evidence="2">Cytoplasm</location>
        <location evidence="2">Perinuclear region</location>
    </subcellularLocation>
    <subcellularLocation>
        <location evidence="2">Nucleus</location>
    </subcellularLocation>
    <text evidence="2">Forms an intramembrane hairpin-like structure in the membrane.</text>
</comment>
<comment type="alternative products">
    <event type="alternative splicing"/>
    <isoform>
        <id>Q05AS3-1</id>
        <name>1</name>
        <sequence type="displayed"/>
    </isoform>
    <isoform>
        <id>Q05AS3-2</id>
        <name>2</name>
        <sequence type="described" ref="VSP_036649"/>
    </isoform>
</comment>
<comment type="similarity">
    <text evidence="2">Belongs to the AAA ATPase family. Spastin subfamily.</text>
</comment>
<gene>
    <name evidence="2" type="primary">spast</name>
    <name evidence="2" type="synonym">spg4</name>
    <name type="ORF">TEgg045n18.1</name>
</gene>
<reference key="1">
    <citation type="submission" date="2006-10" db="EMBL/GenBank/DDBJ databases">
        <authorList>
            <consortium name="Sanger Xenopus tropicalis EST/cDNA project"/>
        </authorList>
    </citation>
    <scope>NUCLEOTIDE SEQUENCE [LARGE SCALE MRNA] (ISOFORM 2)</scope>
    <source>
        <tissue>Egg</tissue>
    </source>
</reference>
<reference key="2">
    <citation type="submission" date="2006-09" db="EMBL/GenBank/DDBJ databases">
        <authorList>
            <consortium name="NIH - Xenopus Gene Collection (XGC) project"/>
        </authorList>
    </citation>
    <scope>NUCLEOTIDE SEQUENCE [LARGE SCALE MRNA] (ISOFORM 1)</scope>
    <source>
        <strain>N6</strain>
        <tissue>Skin</tissue>
    </source>
</reference>
<feature type="chain" id="PRO_0000367139" description="Spastin">
    <location>
        <begin position="1"/>
        <end position="603"/>
    </location>
</feature>
<feature type="topological domain" description="Cytoplasmic" evidence="2">
    <location>
        <begin position="1"/>
        <end position="54"/>
    </location>
</feature>
<feature type="intramembrane region" description="Helical" evidence="2">
    <location>
        <begin position="55"/>
        <end position="75"/>
    </location>
</feature>
<feature type="topological domain" description="Cytoplasmic" evidence="2">
    <location>
        <begin position="76"/>
        <end position="603"/>
    </location>
</feature>
<feature type="domain" description="MIT" evidence="1">
    <location>
        <begin position="113"/>
        <end position="188"/>
    </location>
</feature>
<feature type="region of interest" description="Disordered" evidence="3">
    <location>
        <begin position="1"/>
        <end position="34"/>
    </location>
</feature>
<feature type="region of interest" description="Disordered" evidence="3">
    <location>
        <begin position="216"/>
        <end position="294"/>
    </location>
</feature>
<feature type="compositionally biased region" description="Pro residues" evidence="3">
    <location>
        <begin position="22"/>
        <end position="32"/>
    </location>
</feature>
<feature type="compositionally biased region" description="Basic and acidic residues" evidence="3">
    <location>
        <begin position="219"/>
        <end position="231"/>
    </location>
</feature>
<feature type="compositionally biased region" description="Low complexity" evidence="3">
    <location>
        <begin position="281"/>
        <end position="294"/>
    </location>
</feature>
<feature type="binding site" evidence="2">
    <location>
        <begin position="369"/>
        <end position="376"/>
    </location>
    <ligand>
        <name>ATP</name>
        <dbReference type="ChEBI" id="CHEBI:30616"/>
    </ligand>
</feature>
<feature type="splice variant" id="VSP_036649" description="In isoform 2." evidence="4">
    <location>
        <begin position="189"/>
        <end position="220"/>
    </location>
</feature>
<feature type="sequence conflict" description="In Ref. 1; CAJ82090." evidence="5" ref="1">
    <original>N</original>
    <variation>D</variation>
    <location>
        <position position="9"/>
    </location>
</feature>
<proteinExistence type="evidence at transcript level"/>
<dbReference type="EC" id="5.6.1.1" evidence="2"/>
<dbReference type="EMBL" id="CR760974">
    <property type="protein sequence ID" value="CAJ82090.1"/>
    <property type="molecule type" value="mRNA"/>
</dbReference>
<dbReference type="EMBL" id="BC123973">
    <property type="protein sequence ID" value="AAI23974.1"/>
    <property type="molecule type" value="mRNA"/>
</dbReference>
<dbReference type="RefSeq" id="NP_001016453.1">
    <property type="nucleotide sequence ID" value="NM_001016453.2"/>
</dbReference>
<dbReference type="RefSeq" id="XP_012818464.1">
    <molecule id="Q05AS3-1"/>
    <property type="nucleotide sequence ID" value="XM_012963010.3"/>
</dbReference>
<dbReference type="SMR" id="Q05AS3"/>
<dbReference type="FunCoup" id="Q05AS3">
    <property type="interactions" value="3248"/>
</dbReference>
<dbReference type="STRING" id="8364.ENSXETP00000031690"/>
<dbReference type="PaxDb" id="8364-ENSXETP00000024877"/>
<dbReference type="DNASU" id="549207"/>
<dbReference type="GeneID" id="549207"/>
<dbReference type="KEGG" id="xtr:549207"/>
<dbReference type="AGR" id="Xenbase:XB-GENE-947839"/>
<dbReference type="CTD" id="6683"/>
<dbReference type="Xenbase" id="XB-GENE-947839">
    <property type="gene designation" value="spast"/>
</dbReference>
<dbReference type="eggNOG" id="KOG0740">
    <property type="taxonomic scope" value="Eukaryota"/>
</dbReference>
<dbReference type="HOGENOM" id="CLU_000688_21_5_1"/>
<dbReference type="InParanoid" id="Q05AS3"/>
<dbReference type="OMA" id="KSREPML"/>
<dbReference type="OrthoDB" id="10251136at2759"/>
<dbReference type="PhylomeDB" id="Q05AS3"/>
<dbReference type="Reactome" id="R-XTR-9668328">
    <property type="pathway name" value="Sealing of the nuclear envelope (NE) by ESCRT-III"/>
</dbReference>
<dbReference type="Proteomes" id="UP000008143">
    <property type="component" value="Chromosome 5"/>
</dbReference>
<dbReference type="Bgee" id="ENSXETG00000011392">
    <property type="expression patterns" value="Expressed in ovary and 15 other cell types or tissues"/>
</dbReference>
<dbReference type="ExpressionAtlas" id="Q05AS3">
    <property type="expression patterns" value="baseline"/>
</dbReference>
<dbReference type="GO" id="GO:1904115">
    <property type="term" value="C:axon cytoplasm"/>
    <property type="evidence" value="ECO:0007669"/>
    <property type="project" value="GOC"/>
</dbReference>
<dbReference type="GO" id="GO:0005813">
    <property type="term" value="C:centrosome"/>
    <property type="evidence" value="ECO:0007669"/>
    <property type="project" value="UniProtKB-SubCell"/>
</dbReference>
<dbReference type="GO" id="GO:0005737">
    <property type="term" value="C:cytoplasm"/>
    <property type="evidence" value="ECO:0000250"/>
    <property type="project" value="UniProtKB"/>
</dbReference>
<dbReference type="GO" id="GO:0005874">
    <property type="term" value="C:microtubule"/>
    <property type="evidence" value="ECO:0007669"/>
    <property type="project" value="UniProtKB-UniRule"/>
</dbReference>
<dbReference type="GO" id="GO:0030496">
    <property type="term" value="C:midbody"/>
    <property type="evidence" value="ECO:0000250"/>
    <property type="project" value="UniProtKB"/>
</dbReference>
<dbReference type="GO" id="GO:0031965">
    <property type="term" value="C:nuclear membrane"/>
    <property type="evidence" value="ECO:0000250"/>
    <property type="project" value="UniProtKB"/>
</dbReference>
<dbReference type="GO" id="GO:0005634">
    <property type="term" value="C:nucleus"/>
    <property type="evidence" value="ECO:0000250"/>
    <property type="project" value="UniProtKB"/>
</dbReference>
<dbReference type="GO" id="GO:0048471">
    <property type="term" value="C:perinuclear region of cytoplasm"/>
    <property type="evidence" value="ECO:0007669"/>
    <property type="project" value="UniProtKB-SubCell"/>
</dbReference>
<dbReference type="GO" id="GO:0005819">
    <property type="term" value="C:spindle"/>
    <property type="evidence" value="ECO:0007669"/>
    <property type="project" value="UniProtKB-UniRule"/>
</dbReference>
<dbReference type="GO" id="GO:0043014">
    <property type="term" value="F:alpha-tubulin binding"/>
    <property type="evidence" value="ECO:0000250"/>
    <property type="project" value="UniProtKB"/>
</dbReference>
<dbReference type="GO" id="GO:0005524">
    <property type="term" value="F:ATP binding"/>
    <property type="evidence" value="ECO:0007669"/>
    <property type="project" value="UniProtKB-UniRule"/>
</dbReference>
<dbReference type="GO" id="GO:0016887">
    <property type="term" value="F:ATP hydrolysis activity"/>
    <property type="evidence" value="ECO:0007669"/>
    <property type="project" value="InterPro"/>
</dbReference>
<dbReference type="GO" id="GO:0048487">
    <property type="term" value="F:beta-tubulin binding"/>
    <property type="evidence" value="ECO:0000250"/>
    <property type="project" value="UniProtKB"/>
</dbReference>
<dbReference type="GO" id="GO:0008017">
    <property type="term" value="F:microtubule binding"/>
    <property type="evidence" value="ECO:0000250"/>
    <property type="project" value="UniProtKB"/>
</dbReference>
<dbReference type="GO" id="GO:0008568">
    <property type="term" value="F:microtubule severing ATPase activity"/>
    <property type="evidence" value="ECO:0000250"/>
    <property type="project" value="UniProtKB"/>
</dbReference>
<dbReference type="GO" id="GO:0008089">
    <property type="term" value="P:anterograde axonal transport"/>
    <property type="evidence" value="ECO:0000250"/>
    <property type="project" value="UniProtKB"/>
</dbReference>
<dbReference type="GO" id="GO:0019896">
    <property type="term" value="P:axonal transport of mitochondrion"/>
    <property type="evidence" value="ECO:0000250"/>
    <property type="project" value="UniProtKB"/>
</dbReference>
<dbReference type="GO" id="GO:0007409">
    <property type="term" value="P:axonogenesis"/>
    <property type="evidence" value="ECO:0007669"/>
    <property type="project" value="UniProtKB-UniRule"/>
</dbReference>
<dbReference type="GO" id="GO:0032506">
    <property type="term" value="P:cytokinetic process"/>
    <property type="evidence" value="ECO:0007669"/>
    <property type="project" value="UniProtKB-UniRule"/>
</dbReference>
<dbReference type="GO" id="GO:0006888">
    <property type="term" value="P:endoplasmic reticulum to Golgi vesicle-mediated transport"/>
    <property type="evidence" value="ECO:0007669"/>
    <property type="project" value="UniProtKB-UniRule"/>
</dbReference>
<dbReference type="GO" id="GO:0010458">
    <property type="term" value="P:exit from mitosis"/>
    <property type="evidence" value="ECO:0000250"/>
    <property type="project" value="UniProtKB"/>
</dbReference>
<dbReference type="GO" id="GO:0090148">
    <property type="term" value="P:membrane fission"/>
    <property type="evidence" value="ECO:0000250"/>
    <property type="project" value="UniProtKB"/>
</dbReference>
<dbReference type="GO" id="GO:0001578">
    <property type="term" value="P:microtubule bundle formation"/>
    <property type="evidence" value="ECO:0000250"/>
    <property type="project" value="UniProtKB"/>
</dbReference>
<dbReference type="GO" id="GO:0051013">
    <property type="term" value="P:microtubule severing"/>
    <property type="evidence" value="ECO:0000250"/>
    <property type="project" value="UniProtKB"/>
</dbReference>
<dbReference type="GO" id="GO:0000281">
    <property type="term" value="P:mitotic cytokinesis"/>
    <property type="evidence" value="ECO:0000250"/>
    <property type="project" value="UniProtKB"/>
</dbReference>
<dbReference type="GO" id="GO:0051228">
    <property type="term" value="P:mitotic spindle disassembly"/>
    <property type="evidence" value="ECO:0000250"/>
    <property type="project" value="UniProtKB"/>
</dbReference>
<dbReference type="GO" id="GO:0031468">
    <property type="term" value="P:nuclear membrane reassembly"/>
    <property type="evidence" value="ECO:0000250"/>
    <property type="project" value="UniProtKB"/>
</dbReference>
<dbReference type="GO" id="GO:0031117">
    <property type="term" value="P:positive regulation of microtubule depolymerization"/>
    <property type="evidence" value="ECO:0007669"/>
    <property type="project" value="UniProtKB-UniRule"/>
</dbReference>
<dbReference type="GO" id="GO:0034214">
    <property type="term" value="P:protein hexamerization"/>
    <property type="evidence" value="ECO:0000250"/>
    <property type="project" value="UniProtKB"/>
</dbReference>
<dbReference type="GO" id="GO:0051260">
    <property type="term" value="P:protein homooligomerization"/>
    <property type="evidence" value="ECO:0000250"/>
    <property type="project" value="UniProtKB"/>
</dbReference>
<dbReference type="CDD" id="cd02679">
    <property type="entry name" value="MIT_spastin"/>
    <property type="match status" value="1"/>
</dbReference>
<dbReference type="CDD" id="cd19524">
    <property type="entry name" value="RecA-like_spastin"/>
    <property type="match status" value="1"/>
</dbReference>
<dbReference type="FunFam" id="3.40.50.300:FF:000093">
    <property type="entry name" value="Fidgetin-like 1"/>
    <property type="match status" value="1"/>
</dbReference>
<dbReference type="FunFam" id="1.10.8.60:FF:000036">
    <property type="entry name" value="Spastin"/>
    <property type="match status" value="1"/>
</dbReference>
<dbReference type="FunFam" id="1.20.58.80:FF:000006">
    <property type="entry name" value="Spastin"/>
    <property type="match status" value="1"/>
</dbReference>
<dbReference type="Gene3D" id="1.10.8.60">
    <property type="match status" value="1"/>
</dbReference>
<dbReference type="Gene3D" id="3.40.50.300">
    <property type="entry name" value="P-loop containing nucleotide triphosphate hydrolases"/>
    <property type="match status" value="1"/>
</dbReference>
<dbReference type="Gene3D" id="1.20.58.80">
    <property type="entry name" value="Phosphotransferase system, lactose/cellobiose-type IIA subunit"/>
    <property type="match status" value="1"/>
</dbReference>
<dbReference type="HAMAP" id="MF_03021">
    <property type="entry name" value="Spastin"/>
    <property type="match status" value="1"/>
</dbReference>
<dbReference type="InterPro" id="IPR003593">
    <property type="entry name" value="AAA+_ATPase"/>
</dbReference>
<dbReference type="InterPro" id="IPR041569">
    <property type="entry name" value="AAA_lid_3"/>
</dbReference>
<dbReference type="InterPro" id="IPR003959">
    <property type="entry name" value="ATPase_AAA_core"/>
</dbReference>
<dbReference type="InterPro" id="IPR003960">
    <property type="entry name" value="ATPase_AAA_CS"/>
</dbReference>
<dbReference type="InterPro" id="IPR007330">
    <property type="entry name" value="MIT_dom"/>
</dbReference>
<dbReference type="InterPro" id="IPR036181">
    <property type="entry name" value="MIT_dom_sf"/>
</dbReference>
<dbReference type="InterPro" id="IPR050304">
    <property type="entry name" value="MT-severing_AAA_ATPase"/>
</dbReference>
<dbReference type="InterPro" id="IPR027417">
    <property type="entry name" value="P-loop_NTPase"/>
</dbReference>
<dbReference type="InterPro" id="IPR015415">
    <property type="entry name" value="Spast_Vps4_C"/>
</dbReference>
<dbReference type="InterPro" id="IPR017179">
    <property type="entry name" value="Spastin"/>
</dbReference>
<dbReference type="InterPro" id="IPR035106">
    <property type="entry name" value="Spastin_chordate"/>
</dbReference>
<dbReference type="PANTHER" id="PTHR23074">
    <property type="entry name" value="AAA DOMAIN-CONTAINING"/>
    <property type="match status" value="1"/>
</dbReference>
<dbReference type="PANTHER" id="PTHR23074:SF86">
    <property type="entry name" value="SPASTIN"/>
    <property type="match status" value="1"/>
</dbReference>
<dbReference type="Pfam" id="PF00004">
    <property type="entry name" value="AAA"/>
    <property type="match status" value="1"/>
</dbReference>
<dbReference type="Pfam" id="PF17862">
    <property type="entry name" value="AAA_lid_3"/>
    <property type="match status" value="1"/>
</dbReference>
<dbReference type="Pfam" id="PF09336">
    <property type="entry name" value="Vps4_C"/>
    <property type="match status" value="1"/>
</dbReference>
<dbReference type="PIRSF" id="PIRSF037338">
    <property type="entry name" value="Spastin"/>
    <property type="match status" value="1"/>
</dbReference>
<dbReference type="SMART" id="SM00382">
    <property type="entry name" value="AAA"/>
    <property type="match status" value="1"/>
</dbReference>
<dbReference type="SMART" id="SM00745">
    <property type="entry name" value="MIT"/>
    <property type="match status" value="1"/>
</dbReference>
<dbReference type="SUPFAM" id="SSF116846">
    <property type="entry name" value="MIT domain"/>
    <property type="match status" value="1"/>
</dbReference>
<dbReference type="SUPFAM" id="SSF52540">
    <property type="entry name" value="P-loop containing nucleoside triphosphate hydrolases"/>
    <property type="match status" value="1"/>
</dbReference>
<dbReference type="PROSITE" id="PS00674">
    <property type="entry name" value="AAA"/>
    <property type="match status" value="1"/>
</dbReference>